<name>PP162_ARATH</name>
<gene>
    <name type="ordered locus">At2g18520</name>
    <name type="ORF">F24H14.13</name>
</gene>
<accession>Q9ZU67</accession>
<organism>
    <name type="scientific">Arabidopsis thaliana</name>
    <name type="common">Mouse-ear cress</name>
    <dbReference type="NCBI Taxonomy" id="3702"/>
    <lineage>
        <taxon>Eukaryota</taxon>
        <taxon>Viridiplantae</taxon>
        <taxon>Streptophyta</taxon>
        <taxon>Embryophyta</taxon>
        <taxon>Tracheophyta</taxon>
        <taxon>Spermatophyta</taxon>
        <taxon>Magnoliopsida</taxon>
        <taxon>eudicotyledons</taxon>
        <taxon>Gunneridae</taxon>
        <taxon>Pentapetalae</taxon>
        <taxon>rosids</taxon>
        <taxon>malvids</taxon>
        <taxon>Brassicales</taxon>
        <taxon>Brassicaceae</taxon>
        <taxon>Camelineae</taxon>
        <taxon>Arabidopsis</taxon>
    </lineage>
</organism>
<keyword id="KW-0496">Mitochondrion</keyword>
<keyword id="KW-1185">Reference proteome</keyword>
<keyword id="KW-0677">Repeat</keyword>
<keyword id="KW-0809">Transit peptide</keyword>
<feature type="transit peptide" description="Mitochondrion" evidence="1">
    <location>
        <begin position="1"/>
        <end position="14"/>
    </location>
</feature>
<feature type="chain" id="PRO_0000356021" description="Pentatricopeptide repeat-containing protein At2g18520, mitochondrial">
    <location>
        <begin position="15"/>
        <end position="418"/>
    </location>
</feature>
<feature type="repeat" description="PPR 1">
    <location>
        <begin position="101"/>
        <end position="135"/>
    </location>
</feature>
<feature type="repeat" description="PPR 2">
    <location>
        <begin position="136"/>
        <end position="166"/>
    </location>
</feature>
<feature type="repeat" description="PPR 3">
    <location>
        <begin position="173"/>
        <end position="207"/>
    </location>
</feature>
<feature type="repeat" description="PPR 4">
    <location>
        <begin position="208"/>
        <end position="242"/>
    </location>
</feature>
<feature type="repeat" description="PPR 5">
    <location>
        <begin position="243"/>
        <end position="276"/>
    </location>
</feature>
<feature type="repeat" description="PPR 6">
    <location>
        <begin position="277"/>
        <end position="311"/>
    </location>
</feature>
<feature type="repeat" description="PPR 7">
    <location>
        <begin position="312"/>
        <end position="342"/>
    </location>
</feature>
<feature type="repeat" description="PPR 8">
    <location>
        <begin position="343"/>
        <end position="373"/>
    </location>
</feature>
<reference key="1">
    <citation type="journal article" date="1999" name="Nature">
        <title>Sequence and analysis of chromosome 2 of the plant Arabidopsis thaliana.</title>
        <authorList>
            <person name="Lin X."/>
            <person name="Kaul S."/>
            <person name="Rounsley S.D."/>
            <person name="Shea T.P."/>
            <person name="Benito M.-I."/>
            <person name="Town C.D."/>
            <person name="Fujii C.Y."/>
            <person name="Mason T.M."/>
            <person name="Bowman C.L."/>
            <person name="Barnstead M.E."/>
            <person name="Feldblyum T.V."/>
            <person name="Buell C.R."/>
            <person name="Ketchum K.A."/>
            <person name="Lee J.J."/>
            <person name="Ronning C.M."/>
            <person name="Koo H.L."/>
            <person name="Moffat K.S."/>
            <person name="Cronin L.A."/>
            <person name="Shen M."/>
            <person name="Pai G."/>
            <person name="Van Aken S."/>
            <person name="Umayam L."/>
            <person name="Tallon L.J."/>
            <person name="Gill J.E."/>
            <person name="Adams M.D."/>
            <person name="Carrera A.J."/>
            <person name="Creasy T.H."/>
            <person name="Goodman H.M."/>
            <person name="Somerville C.R."/>
            <person name="Copenhaver G.P."/>
            <person name="Preuss D."/>
            <person name="Nierman W.C."/>
            <person name="White O."/>
            <person name="Eisen J.A."/>
            <person name="Salzberg S.L."/>
            <person name="Fraser C.M."/>
            <person name="Venter J.C."/>
        </authorList>
    </citation>
    <scope>NUCLEOTIDE SEQUENCE [LARGE SCALE GENOMIC DNA]</scope>
    <source>
        <strain>cv. Columbia</strain>
    </source>
</reference>
<reference key="2">
    <citation type="journal article" date="2017" name="Plant J.">
        <title>Araport11: a complete reannotation of the Arabidopsis thaliana reference genome.</title>
        <authorList>
            <person name="Cheng C.Y."/>
            <person name="Krishnakumar V."/>
            <person name="Chan A.P."/>
            <person name="Thibaud-Nissen F."/>
            <person name="Schobel S."/>
            <person name="Town C.D."/>
        </authorList>
    </citation>
    <scope>GENOME REANNOTATION</scope>
    <source>
        <strain>cv. Columbia</strain>
    </source>
</reference>
<reference key="3">
    <citation type="submission" date="2002-03" db="EMBL/GenBank/DDBJ databases">
        <title>Full-length cDNA from Arabidopsis thaliana.</title>
        <authorList>
            <person name="Brover V.V."/>
            <person name="Troukhan M.E."/>
            <person name="Alexandrov N.A."/>
            <person name="Lu Y.-P."/>
            <person name="Flavell R.B."/>
            <person name="Feldmann K.A."/>
        </authorList>
    </citation>
    <scope>NUCLEOTIDE SEQUENCE [LARGE SCALE MRNA]</scope>
</reference>
<reference key="4">
    <citation type="journal article" date="2004" name="Plant Cell">
        <title>Genome-wide analysis of Arabidopsis pentatricopeptide repeat proteins reveals their essential role in organelle biogenesis.</title>
        <authorList>
            <person name="Lurin C."/>
            <person name="Andres C."/>
            <person name="Aubourg S."/>
            <person name="Bellaoui M."/>
            <person name="Bitton F."/>
            <person name="Bruyere C."/>
            <person name="Caboche M."/>
            <person name="Debast C."/>
            <person name="Gualberto J."/>
            <person name="Hoffmann B."/>
            <person name="Lecharny A."/>
            <person name="Le Ret M."/>
            <person name="Martin-Magniette M.-L."/>
            <person name="Mireau H."/>
            <person name="Peeters N."/>
            <person name="Renou J.-P."/>
            <person name="Szurek B."/>
            <person name="Taconnat L."/>
            <person name="Small I."/>
        </authorList>
    </citation>
    <scope>GENE FAMILY</scope>
</reference>
<reference key="5">
    <citation type="journal article" date="2015" name="J. Exp. Bot.">
        <title>Identification of cleavage sites and substrate proteins for two mitochondrial intermediate peptidases in Arabidopsis thaliana.</title>
        <authorList>
            <person name="Carrie C."/>
            <person name="Venne A.S."/>
            <person name="Zahedi R.P."/>
            <person name="Soll J."/>
        </authorList>
    </citation>
    <scope>IDENTIFICATION BY MASS SPECTROMETRY</scope>
    <scope>CLEAVAGE OF TRANSIT PEPTIDE AFTER PHE-14</scope>
</reference>
<sequence length="418" mass="47328">MTSSRLYLRFLRRFSTATGIDSQTTAYPGAITMSKAKSKLRKVQDPDKALAIYKSVSNNSTSPLSSRYAMELTVQRLAKSQRFSDIEALIESHKNNPKIKTETFLSTLIRSYGRASMFDHAMKMFEEMDKLGTPRTVVSFNALLAACLHSDLFERVPQLFDEFPQRYNNITPDKISYGMLIKSYCDSGKPEKAMEIMRDMEVKGVEVTIIAFTTILGSLYKNGLVDEAESLWIEMVNKGCDLDNTVYNVRLMNAAKESPERVKELMEEMSSVGLKPDTVSYNYLMTAYCVKGMMSEAKKVYEGLEQPNAATFRTLIFHLCINGLYDQGLTVFKKSAIVHKIPDFKTCKHLTEGLVKNNRMEDARGVARIVKKKFPPRLVTEWKKLEEKLGLYSKGNAAAVSSSSQTREVLDQEREDDV</sequence>
<evidence type="ECO:0000269" key="1">
    <source>
    </source>
</evidence>
<evidence type="ECO:0000305" key="2"/>
<evidence type="ECO:0000305" key="3">
    <source>
    </source>
</evidence>
<protein>
    <recommendedName>
        <fullName>Pentatricopeptide repeat-containing protein At2g18520, mitochondrial</fullName>
    </recommendedName>
</protein>
<proteinExistence type="evidence at protein level"/>
<dbReference type="EMBL" id="AC006135">
    <property type="protein sequence ID" value="AAD12215.1"/>
    <property type="molecule type" value="Genomic_DNA"/>
</dbReference>
<dbReference type="EMBL" id="CP002685">
    <property type="protein sequence ID" value="AEC06777.1"/>
    <property type="molecule type" value="Genomic_DNA"/>
</dbReference>
<dbReference type="EMBL" id="AY088617">
    <property type="protein sequence ID" value="AAM66940.1"/>
    <property type="molecule type" value="mRNA"/>
</dbReference>
<dbReference type="PIR" id="C84565">
    <property type="entry name" value="C84565"/>
</dbReference>
<dbReference type="RefSeq" id="NP_565439.1">
    <property type="nucleotide sequence ID" value="NM_127408.2"/>
</dbReference>
<dbReference type="SMR" id="Q9ZU67"/>
<dbReference type="FunCoup" id="Q9ZU67">
    <property type="interactions" value="160"/>
</dbReference>
<dbReference type="STRING" id="3702.Q9ZU67"/>
<dbReference type="iPTMnet" id="Q9ZU67"/>
<dbReference type="PaxDb" id="3702-AT2G18520.1"/>
<dbReference type="ProteomicsDB" id="249138"/>
<dbReference type="EnsemblPlants" id="AT2G18520.1">
    <property type="protein sequence ID" value="AT2G18520.1"/>
    <property type="gene ID" value="AT2G18520"/>
</dbReference>
<dbReference type="GeneID" id="816367"/>
<dbReference type="Gramene" id="AT2G18520.1">
    <property type="protein sequence ID" value="AT2G18520.1"/>
    <property type="gene ID" value="AT2G18520"/>
</dbReference>
<dbReference type="KEGG" id="ath:AT2G18520"/>
<dbReference type="Araport" id="AT2G18520"/>
<dbReference type="TAIR" id="AT2G18520"/>
<dbReference type="eggNOG" id="KOG4197">
    <property type="taxonomic scope" value="Eukaryota"/>
</dbReference>
<dbReference type="HOGENOM" id="CLU_002706_10_3_1"/>
<dbReference type="InParanoid" id="Q9ZU67"/>
<dbReference type="OMA" id="VKNNRME"/>
<dbReference type="OrthoDB" id="185373at2759"/>
<dbReference type="PhylomeDB" id="Q9ZU67"/>
<dbReference type="PRO" id="PR:Q9ZU67"/>
<dbReference type="Proteomes" id="UP000006548">
    <property type="component" value="Chromosome 2"/>
</dbReference>
<dbReference type="ExpressionAtlas" id="Q9ZU67">
    <property type="expression patterns" value="baseline and differential"/>
</dbReference>
<dbReference type="GO" id="GO:0005739">
    <property type="term" value="C:mitochondrion"/>
    <property type="evidence" value="ECO:0007669"/>
    <property type="project" value="UniProtKB-SubCell"/>
</dbReference>
<dbReference type="FunFam" id="1.25.40.10:FF:001892">
    <property type="entry name" value="Pentatricopeptide repeat-containing protein At2g18520, mitochondrial"/>
    <property type="match status" value="1"/>
</dbReference>
<dbReference type="FunFam" id="1.25.40.10:FF:001891">
    <property type="entry name" value="Pentatricopeptide repeat-containing protein At4g36680, mitochondrial"/>
    <property type="match status" value="1"/>
</dbReference>
<dbReference type="Gene3D" id="1.25.40.10">
    <property type="entry name" value="Tetratricopeptide repeat domain"/>
    <property type="match status" value="2"/>
</dbReference>
<dbReference type="InterPro" id="IPR002885">
    <property type="entry name" value="Pentatricopeptide_rpt"/>
</dbReference>
<dbReference type="InterPro" id="IPR011990">
    <property type="entry name" value="TPR-like_helical_dom_sf"/>
</dbReference>
<dbReference type="NCBIfam" id="TIGR00756">
    <property type="entry name" value="PPR"/>
    <property type="match status" value="4"/>
</dbReference>
<dbReference type="PANTHER" id="PTHR46862">
    <property type="entry name" value="OS07G0661900 PROTEIN"/>
    <property type="match status" value="1"/>
</dbReference>
<dbReference type="PANTHER" id="PTHR46862:SF3">
    <property type="entry name" value="OS07G0661900 PROTEIN"/>
    <property type="match status" value="1"/>
</dbReference>
<dbReference type="Pfam" id="PF01535">
    <property type="entry name" value="PPR"/>
    <property type="match status" value="2"/>
</dbReference>
<dbReference type="Pfam" id="PF13041">
    <property type="entry name" value="PPR_2"/>
    <property type="match status" value="2"/>
</dbReference>
<dbReference type="PROSITE" id="PS51375">
    <property type="entry name" value="PPR"/>
    <property type="match status" value="8"/>
</dbReference>
<comment type="subcellular location">
    <subcellularLocation>
        <location evidence="3">Mitochondrion</location>
    </subcellularLocation>
</comment>
<comment type="similarity">
    <text evidence="2">Belongs to the PPR family. P subfamily.</text>
</comment>
<comment type="online information" name="Pentatricopeptide repeat proteins">
    <link uri="https://ppr.plantenergy.uwa.edu.au"/>
</comment>